<protein>
    <recommendedName>
        <fullName evidence="1">Phosphoglucosamine mutase</fullName>
        <ecNumber evidence="1">5.4.2.10</ecNumber>
    </recommendedName>
</protein>
<keyword id="KW-0413">Isomerase</keyword>
<keyword id="KW-0460">Magnesium</keyword>
<keyword id="KW-0479">Metal-binding</keyword>
<keyword id="KW-0597">Phosphoprotein</keyword>
<evidence type="ECO:0000255" key="1">
    <source>
        <dbReference type="HAMAP-Rule" id="MF_01554"/>
    </source>
</evidence>
<comment type="function">
    <text evidence="1">Catalyzes the conversion of glucosamine-6-phosphate to glucosamine-1-phosphate.</text>
</comment>
<comment type="catalytic activity">
    <reaction evidence="1">
        <text>alpha-D-glucosamine 1-phosphate = D-glucosamine 6-phosphate</text>
        <dbReference type="Rhea" id="RHEA:23424"/>
        <dbReference type="ChEBI" id="CHEBI:58516"/>
        <dbReference type="ChEBI" id="CHEBI:58725"/>
        <dbReference type="EC" id="5.4.2.10"/>
    </reaction>
</comment>
<comment type="cofactor">
    <cofactor evidence="1">
        <name>Mg(2+)</name>
        <dbReference type="ChEBI" id="CHEBI:18420"/>
    </cofactor>
    <text evidence="1">Binds 1 Mg(2+) ion per subunit.</text>
</comment>
<comment type="PTM">
    <text evidence="1">Activated by phosphorylation.</text>
</comment>
<comment type="similarity">
    <text evidence="1">Belongs to the phosphohexose mutase family.</text>
</comment>
<reference key="1">
    <citation type="journal article" date="2008" name="PLoS ONE">
        <title>Genome sequence of a lancefield group C Streptococcus zooepidemicus strain causing epidemic nephritis: new information about an old disease.</title>
        <authorList>
            <person name="Beres S.B."/>
            <person name="Sesso R."/>
            <person name="Pinto S.W.L."/>
            <person name="Hoe N.P."/>
            <person name="Porcella S.F."/>
            <person name="Deleo F.R."/>
            <person name="Musser J.M."/>
        </authorList>
    </citation>
    <scope>NUCLEOTIDE SEQUENCE [LARGE SCALE GENOMIC DNA]</scope>
    <source>
        <strain>MGCS10565</strain>
    </source>
</reference>
<feature type="chain" id="PRO_1000201145" description="Phosphoglucosamine mutase">
    <location>
        <begin position="1"/>
        <end position="450"/>
    </location>
</feature>
<feature type="active site" description="Phosphoserine intermediate" evidence="1">
    <location>
        <position position="101"/>
    </location>
</feature>
<feature type="binding site" description="via phosphate group" evidence="1">
    <location>
        <position position="101"/>
    </location>
    <ligand>
        <name>Mg(2+)</name>
        <dbReference type="ChEBI" id="CHEBI:18420"/>
    </ligand>
</feature>
<feature type="binding site" evidence="1">
    <location>
        <position position="240"/>
    </location>
    <ligand>
        <name>Mg(2+)</name>
        <dbReference type="ChEBI" id="CHEBI:18420"/>
    </ligand>
</feature>
<feature type="binding site" evidence="1">
    <location>
        <position position="242"/>
    </location>
    <ligand>
        <name>Mg(2+)</name>
        <dbReference type="ChEBI" id="CHEBI:18420"/>
    </ligand>
</feature>
<feature type="binding site" evidence="1">
    <location>
        <position position="244"/>
    </location>
    <ligand>
        <name>Mg(2+)</name>
        <dbReference type="ChEBI" id="CHEBI:18420"/>
    </ligand>
</feature>
<feature type="modified residue" description="Phosphoserine" evidence="1">
    <location>
        <position position="101"/>
    </location>
</feature>
<dbReference type="EC" id="5.4.2.10" evidence="1"/>
<dbReference type="EMBL" id="CP001129">
    <property type="protein sequence ID" value="ACG62553.1"/>
    <property type="molecule type" value="Genomic_DNA"/>
</dbReference>
<dbReference type="RefSeq" id="WP_012515818.1">
    <property type="nucleotide sequence ID" value="NC_011134.1"/>
</dbReference>
<dbReference type="SMR" id="B4U3I6"/>
<dbReference type="KEGG" id="sez:Sez_1211"/>
<dbReference type="HOGENOM" id="CLU_016950_7_0_9"/>
<dbReference type="Proteomes" id="UP000001873">
    <property type="component" value="Chromosome"/>
</dbReference>
<dbReference type="GO" id="GO:0005829">
    <property type="term" value="C:cytosol"/>
    <property type="evidence" value="ECO:0007669"/>
    <property type="project" value="TreeGrafter"/>
</dbReference>
<dbReference type="GO" id="GO:0000287">
    <property type="term" value="F:magnesium ion binding"/>
    <property type="evidence" value="ECO:0007669"/>
    <property type="project" value="UniProtKB-UniRule"/>
</dbReference>
<dbReference type="GO" id="GO:0008966">
    <property type="term" value="F:phosphoglucosamine mutase activity"/>
    <property type="evidence" value="ECO:0007669"/>
    <property type="project" value="UniProtKB-UniRule"/>
</dbReference>
<dbReference type="GO" id="GO:0004615">
    <property type="term" value="F:phosphomannomutase activity"/>
    <property type="evidence" value="ECO:0007669"/>
    <property type="project" value="TreeGrafter"/>
</dbReference>
<dbReference type="GO" id="GO:0005975">
    <property type="term" value="P:carbohydrate metabolic process"/>
    <property type="evidence" value="ECO:0007669"/>
    <property type="project" value="InterPro"/>
</dbReference>
<dbReference type="GO" id="GO:0009252">
    <property type="term" value="P:peptidoglycan biosynthetic process"/>
    <property type="evidence" value="ECO:0007669"/>
    <property type="project" value="TreeGrafter"/>
</dbReference>
<dbReference type="GO" id="GO:0006048">
    <property type="term" value="P:UDP-N-acetylglucosamine biosynthetic process"/>
    <property type="evidence" value="ECO:0007669"/>
    <property type="project" value="TreeGrafter"/>
</dbReference>
<dbReference type="CDD" id="cd05802">
    <property type="entry name" value="GlmM"/>
    <property type="match status" value="1"/>
</dbReference>
<dbReference type="FunFam" id="3.30.310.50:FF:000001">
    <property type="entry name" value="Phosphoglucosamine mutase"/>
    <property type="match status" value="1"/>
</dbReference>
<dbReference type="FunFam" id="3.40.120.10:FF:000001">
    <property type="entry name" value="Phosphoglucosamine mutase"/>
    <property type="match status" value="1"/>
</dbReference>
<dbReference type="FunFam" id="3.40.120.10:FF:000002">
    <property type="entry name" value="Phosphoglucosamine mutase"/>
    <property type="match status" value="1"/>
</dbReference>
<dbReference type="Gene3D" id="3.40.120.10">
    <property type="entry name" value="Alpha-D-Glucose-1,6-Bisphosphate, subunit A, domain 3"/>
    <property type="match status" value="3"/>
</dbReference>
<dbReference type="Gene3D" id="3.30.310.50">
    <property type="entry name" value="Alpha-D-phosphohexomutase, C-terminal domain"/>
    <property type="match status" value="1"/>
</dbReference>
<dbReference type="HAMAP" id="MF_01554_B">
    <property type="entry name" value="GlmM_B"/>
    <property type="match status" value="1"/>
</dbReference>
<dbReference type="InterPro" id="IPR005844">
    <property type="entry name" value="A-D-PHexomutase_a/b/a-I"/>
</dbReference>
<dbReference type="InterPro" id="IPR016055">
    <property type="entry name" value="A-D-PHexomutase_a/b/a-I/II/III"/>
</dbReference>
<dbReference type="InterPro" id="IPR005845">
    <property type="entry name" value="A-D-PHexomutase_a/b/a-II"/>
</dbReference>
<dbReference type="InterPro" id="IPR005846">
    <property type="entry name" value="A-D-PHexomutase_a/b/a-III"/>
</dbReference>
<dbReference type="InterPro" id="IPR005843">
    <property type="entry name" value="A-D-PHexomutase_C"/>
</dbReference>
<dbReference type="InterPro" id="IPR036900">
    <property type="entry name" value="A-D-PHexomutase_C_sf"/>
</dbReference>
<dbReference type="InterPro" id="IPR016066">
    <property type="entry name" value="A-D-PHexomutase_CS"/>
</dbReference>
<dbReference type="InterPro" id="IPR005841">
    <property type="entry name" value="Alpha-D-phosphohexomutase_SF"/>
</dbReference>
<dbReference type="InterPro" id="IPR006352">
    <property type="entry name" value="GlmM_bact"/>
</dbReference>
<dbReference type="InterPro" id="IPR050060">
    <property type="entry name" value="Phosphoglucosamine_mutase"/>
</dbReference>
<dbReference type="NCBIfam" id="TIGR01455">
    <property type="entry name" value="glmM"/>
    <property type="match status" value="1"/>
</dbReference>
<dbReference type="PANTHER" id="PTHR42946:SF1">
    <property type="entry name" value="PHOSPHOGLUCOMUTASE (ALPHA-D-GLUCOSE-1,6-BISPHOSPHATE-DEPENDENT)"/>
    <property type="match status" value="1"/>
</dbReference>
<dbReference type="PANTHER" id="PTHR42946">
    <property type="entry name" value="PHOSPHOHEXOSE MUTASE"/>
    <property type="match status" value="1"/>
</dbReference>
<dbReference type="Pfam" id="PF02878">
    <property type="entry name" value="PGM_PMM_I"/>
    <property type="match status" value="1"/>
</dbReference>
<dbReference type="Pfam" id="PF02879">
    <property type="entry name" value="PGM_PMM_II"/>
    <property type="match status" value="1"/>
</dbReference>
<dbReference type="Pfam" id="PF02880">
    <property type="entry name" value="PGM_PMM_III"/>
    <property type="match status" value="1"/>
</dbReference>
<dbReference type="Pfam" id="PF00408">
    <property type="entry name" value="PGM_PMM_IV"/>
    <property type="match status" value="1"/>
</dbReference>
<dbReference type="PRINTS" id="PR00509">
    <property type="entry name" value="PGMPMM"/>
</dbReference>
<dbReference type="SUPFAM" id="SSF55957">
    <property type="entry name" value="Phosphoglucomutase, C-terminal domain"/>
    <property type="match status" value="1"/>
</dbReference>
<dbReference type="SUPFAM" id="SSF53738">
    <property type="entry name" value="Phosphoglucomutase, first 3 domains"/>
    <property type="match status" value="3"/>
</dbReference>
<dbReference type="PROSITE" id="PS00710">
    <property type="entry name" value="PGM_PMM"/>
    <property type="match status" value="1"/>
</dbReference>
<accession>B4U3I6</accession>
<name>GLMM_STREM</name>
<organism>
    <name type="scientific">Streptococcus equi subsp. zooepidemicus (strain MGCS10565)</name>
    <dbReference type="NCBI Taxonomy" id="552526"/>
    <lineage>
        <taxon>Bacteria</taxon>
        <taxon>Bacillati</taxon>
        <taxon>Bacillota</taxon>
        <taxon>Bacilli</taxon>
        <taxon>Lactobacillales</taxon>
        <taxon>Streptococcaceae</taxon>
        <taxon>Streptococcus</taxon>
    </lineage>
</organism>
<proteinExistence type="inferred from homology"/>
<sequence length="450" mass="48333">MGKYFGTDGVRGEANVELTPELAFKLGRFGGYVLSQHETERPRVFVARDTRISGEMLEAALIAGLLSVGIEVYKLGVLATPGVSYLVRTEKASAGVMISASHNPALDNGIKFFGSDGFKLADEQELEIEALLDAKEDLLPRPSAEGLGALVDYPEGLRKYERFLVTTGADLDGLKIALDTANGAASVSARNVFLDLNADITVIGENPNGLNINDGIGSTHPEKLQDLVTETASDIGLAFDGDSDRLIAVDENGAIVDGDKIMFIIGKYLSEKGLLAKNTIVTTVMSNLGFHKALDSCGIHKKVTAVGDRYVVEEMRQFGYNLGGEQSGHVIIMDYNTTGDGQLTAVQLTKIMKETGKTLSELASEVTIYPQKLVNIRVDNSMKERAMEVPAIAEVIAQMEGEMAGNGRILVRPSGTEPLLRVMAEAPSNEEVDYYVDTIAAVVRAEIGLD</sequence>
<gene>
    <name evidence="1" type="primary">glmM</name>
    <name type="ordered locus">Sez_1211</name>
</gene>